<protein>
    <recommendedName>
        <fullName evidence="1">UDP-N-acetylglucosamine--N-acetylmuramyl-(pentapeptide) pyrophosphoryl-undecaprenol N-acetylglucosamine transferase</fullName>
        <ecNumber evidence="1">2.4.1.227</ecNumber>
    </recommendedName>
    <alternativeName>
        <fullName evidence="1">Undecaprenyl-PP-MurNAc-pentapeptide-UDPGlcNAc GlcNAc transferase</fullName>
    </alternativeName>
</protein>
<organism>
    <name type="scientific">Xanthomonas oryzae pv. oryzae (strain KACC10331 / KXO85)</name>
    <dbReference type="NCBI Taxonomy" id="291331"/>
    <lineage>
        <taxon>Bacteria</taxon>
        <taxon>Pseudomonadati</taxon>
        <taxon>Pseudomonadota</taxon>
        <taxon>Gammaproteobacteria</taxon>
        <taxon>Lysobacterales</taxon>
        <taxon>Lysobacteraceae</taxon>
        <taxon>Xanthomonas</taxon>
    </lineage>
</organism>
<sequence>MSVYAHLSQTPAHPSARIQPVMILAGGTGGHIFPGLAVAKVLRARGVPVTWLGADGAMETRLVPQHDIPIDTLAITGLRGKGMVKLLGAPLRVMRAVRAAGFVLRKRQPRAVISFGGFAAGPGGLAARLLGAPLLVHEQNRAPGMTNKVLSRFARRVLTGFPGSFAGEEAVGNPVRAEIAALPAPADRLVGRTGPVCVLVLGGSQGARVLNQAVPTALAALGHPDVEVRHQCGEKLRAEAEVAYAQASVNASVEPFIADMAAAYAWADLVVCRAGASTLAELCAAGVGSVLVPFAAAVDDHQTRNAEYLVGADAAVLLKQDDSLAVRLQQVLQTLLTDPARRLSMANAARTLAKPDAAERIADIILQEAGTGDRQPPAVEERAGFGIGKEQQHKQDSMQNSVDGQFSGRSTAAVANLQCRSLFDSHRLAILTPGTFAGGAA</sequence>
<name>MURG_XANOR</name>
<dbReference type="EC" id="2.4.1.227" evidence="1"/>
<dbReference type="EMBL" id="AE013598">
    <property type="protein sequence ID" value="AAW77080.1"/>
    <property type="molecule type" value="Genomic_DNA"/>
</dbReference>
<dbReference type="SMR" id="Q5GW41"/>
<dbReference type="STRING" id="291331.XOO3826"/>
<dbReference type="CAZy" id="GT28">
    <property type="family name" value="Glycosyltransferase Family 28"/>
</dbReference>
<dbReference type="KEGG" id="xoo:XOO3826"/>
<dbReference type="HOGENOM" id="CLU_037404_2_0_6"/>
<dbReference type="UniPathway" id="UPA00219"/>
<dbReference type="Proteomes" id="UP000006735">
    <property type="component" value="Chromosome"/>
</dbReference>
<dbReference type="GO" id="GO:0005886">
    <property type="term" value="C:plasma membrane"/>
    <property type="evidence" value="ECO:0007669"/>
    <property type="project" value="UniProtKB-SubCell"/>
</dbReference>
<dbReference type="GO" id="GO:0051991">
    <property type="term" value="F:UDP-N-acetyl-D-glucosamine:N-acetylmuramoyl-L-alanyl-D-glutamyl-meso-2,6-diaminopimelyl-D-alanyl-D-alanine-diphosphoundecaprenol 4-beta-N-acetylglucosaminlytransferase activity"/>
    <property type="evidence" value="ECO:0007669"/>
    <property type="project" value="RHEA"/>
</dbReference>
<dbReference type="GO" id="GO:0050511">
    <property type="term" value="F:undecaprenyldiphospho-muramoylpentapeptide beta-N-acetylglucosaminyltransferase activity"/>
    <property type="evidence" value="ECO:0007669"/>
    <property type="project" value="UniProtKB-UniRule"/>
</dbReference>
<dbReference type="GO" id="GO:0005975">
    <property type="term" value="P:carbohydrate metabolic process"/>
    <property type="evidence" value="ECO:0007669"/>
    <property type="project" value="InterPro"/>
</dbReference>
<dbReference type="GO" id="GO:0051301">
    <property type="term" value="P:cell division"/>
    <property type="evidence" value="ECO:0007669"/>
    <property type="project" value="UniProtKB-KW"/>
</dbReference>
<dbReference type="GO" id="GO:0071555">
    <property type="term" value="P:cell wall organization"/>
    <property type="evidence" value="ECO:0007669"/>
    <property type="project" value="UniProtKB-KW"/>
</dbReference>
<dbReference type="GO" id="GO:0030259">
    <property type="term" value="P:lipid glycosylation"/>
    <property type="evidence" value="ECO:0007669"/>
    <property type="project" value="UniProtKB-UniRule"/>
</dbReference>
<dbReference type="GO" id="GO:0009252">
    <property type="term" value="P:peptidoglycan biosynthetic process"/>
    <property type="evidence" value="ECO:0007669"/>
    <property type="project" value="UniProtKB-UniRule"/>
</dbReference>
<dbReference type="GO" id="GO:0008360">
    <property type="term" value="P:regulation of cell shape"/>
    <property type="evidence" value="ECO:0007669"/>
    <property type="project" value="UniProtKB-KW"/>
</dbReference>
<dbReference type="CDD" id="cd03785">
    <property type="entry name" value="GT28_MurG"/>
    <property type="match status" value="1"/>
</dbReference>
<dbReference type="Gene3D" id="3.40.50.2000">
    <property type="entry name" value="Glycogen Phosphorylase B"/>
    <property type="match status" value="2"/>
</dbReference>
<dbReference type="HAMAP" id="MF_00033">
    <property type="entry name" value="MurG"/>
    <property type="match status" value="1"/>
</dbReference>
<dbReference type="InterPro" id="IPR006009">
    <property type="entry name" value="GlcNAc_MurG"/>
</dbReference>
<dbReference type="InterPro" id="IPR007235">
    <property type="entry name" value="Glyco_trans_28_C"/>
</dbReference>
<dbReference type="InterPro" id="IPR004276">
    <property type="entry name" value="GlycoTrans_28_N"/>
</dbReference>
<dbReference type="NCBIfam" id="TIGR01133">
    <property type="entry name" value="murG"/>
    <property type="match status" value="1"/>
</dbReference>
<dbReference type="PANTHER" id="PTHR21015:SF22">
    <property type="entry name" value="GLYCOSYLTRANSFERASE"/>
    <property type="match status" value="1"/>
</dbReference>
<dbReference type="PANTHER" id="PTHR21015">
    <property type="entry name" value="UDP-N-ACETYLGLUCOSAMINE--N-ACETYLMURAMYL-(PENTAPEPTIDE) PYROPHOSPHORYL-UNDECAPRENOL N-ACETYLGLUCOSAMINE TRANSFERASE 1"/>
    <property type="match status" value="1"/>
</dbReference>
<dbReference type="Pfam" id="PF04101">
    <property type="entry name" value="Glyco_tran_28_C"/>
    <property type="match status" value="1"/>
</dbReference>
<dbReference type="Pfam" id="PF03033">
    <property type="entry name" value="Glyco_transf_28"/>
    <property type="match status" value="1"/>
</dbReference>
<dbReference type="SUPFAM" id="SSF53756">
    <property type="entry name" value="UDP-Glycosyltransferase/glycogen phosphorylase"/>
    <property type="match status" value="1"/>
</dbReference>
<evidence type="ECO:0000255" key="1">
    <source>
        <dbReference type="HAMAP-Rule" id="MF_00033"/>
    </source>
</evidence>
<feature type="chain" id="PRO_0000225115" description="UDP-N-acetylglucosamine--N-acetylmuramyl-(pentapeptide) pyrophosphoryl-undecaprenol N-acetylglucosamine transferase">
    <location>
        <begin position="1"/>
        <end position="441"/>
    </location>
</feature>
<feature type="binding site" evidence="1">
    <location>
        <begin position="28"/>
        <end position="30"/>
    </location>
    <ligand>
        <name>UDP-N-acetyl-alpha-D-glucosamine</name>
        <dbReference type="ChEBI" id="CHEBI:57705"/>
    </ligand>
</feature>
<feature type="binding site" evidence="1">
    <location>
        <position position="140"/>
    </location>
    <ligand>
        <name>UDP-N-acetyl-alpha-D-glucosamine</name>
        <dbReference type="ChEBI" id="CHEBI:57705"/>
    </ligand>
</feature>
<feature type="binding site" evidence="1">
    <location>
        <position position="176"/>
    </location>
    <ligand>
        <name>UDP-N-acetyl-alpha-D-glucosamine</name>
        <dbReference type="ChEBI" id="CHEBI:57705"/>
    </ligand>
</feature>
<feature type="binding site" evidence="1">
    <location>
        <position position="204"/>
    </location>
    <ligand>
        <name>UDP-N-acetyl-alpha-D-glucosamine</name>
        <dbReference type="ChEBI" id="CHEBI:57705"/>
    </ligand>
</feature>
<feature type="binding site" evidence="1">
    <location>
        <position position="257"/>
    </location>
    <ligand>
        <name>UDP-N-acetyl-alpha-D-glucosamine</name>
        <dbReference type="ChEBI" id="CHEBI:57705"/>
    </ligand>
</feature>
<feature type="binding site" evidence="1">
    <location>
        <position position="302"/>
    </location>
    <ligand>
        <name>UDP-N-acetyl-alpha-D-glucosamine</name>
        <dbReference type="ChEBI" id="CHEBI:57705"/>
    </ligand>
</feature>
<keyword id="KW-0131">Cell cycle</keyword>
<keyword id="KW-0132">Cell division</keyword>
<keyword id="KW-0997">Cell inner membrane</keyword>
<keyword id="KW-1003">Cell membrane</keyword>
<keyword id="KW-0133">Cell shape</keyword>
<keyword id="KW-0961">Cell wall biogenesis/degradation</keyword>
<keyword id="KW-0328">Glycosyltransferase</keyword>
<keyword id="KW-0472">Membrane</keyword>
<keyword id="KW-0573">Peptidoglycan synthesis</keyword>
<keyword id="KW-1185">Reference proteome</keyword>
<keyword id="KW-0808">Transferase</keyword>
<reference key="1">
    <citation type="journal article" date="2005" name="Nucleic Acids Res.">
        <title>The genome sequence of Xanthomonas oryzae pathovar oryzae KACC10331, the bacterial blight pathogen of rice.</title>
        <authorList>
            <person name="Lee B.-M."/>
            <person name="Park Y.-J."/>
            <person name="Park D.-S."/>
            <person name="Kang H.-W."/>
            <person name="Kim J.-G."/>
            <person name="Song E.-S."/>
            <person name="Park I.-C."/>
            <person name="Yoon U.-H."/>
            <person name="Hahn J.-H."/>
            <person name="Koo B.-S."/>
            <person name="Lee G.-B."/>
            <person name="Kim H."/>
            <person name="Park H.-S."/>
            <person name="Yoon K.-O."/>
            <person name="Kim J.-H."/>
            <person name="Jung C.-H."/>
            <person name="Koh N.-H."/>
            <person name="Seo J.-S."/>
            <person name="Go S.-J."/>
        </authorList>
    </citation>
    <scope>NUCLEOTIDE SEQUENCE [LARGE SCALE GENOMIC DNA]</scope>
    <source>
        <strain>KACC10331 / KXO85</strain>
    </source>
</reference>
<proteinExistence type="inferred from homology"/>
<accession>Q5GW41</accession>
<gene>
    <name evidence="1" type="primary">murG</name>
    <name type="ordered locus">XOO3826</name>
</gene>
<comment type="function">
    <text evidence="1">Cell wall formation. Catalyzes the transfer of a GlcNAc subunit on undecaprenyl-pyrophosphoryl-MurNAc-pentapeptide (lipid intermediate I) to form undecaprenyl-pyrophosphoryl-MurNAc-(pentapeptide)GlcNAc (lipid intermediate II).</text>
</comment>
<comment type="catalytic activity">
    <reaction evidence="1">
        <text>di-trans,octa-cis-undecaprenyl diphospho-N-acetyl-alpha-D-muramoyl-L-alanyl-D-glutamyl-meso-2,6-diaminopimeloyl-D-alanyl-D-alanine + UDP-N-acetyl-alpha-D-glucosamine = di-trans,octa-cis-undecaprenyl diphospho-[N-acetyl-alpha-D-glucosaminyl-(1-&gt;4)]-N-acetyl-alpha-D-muramoyl-L-alanyl-D-glutamyl-meso-2,6-diaminopimeloyl-D-alanyl-D-alanine + UDP + H(+)</text>
        <dbReference type="Rhea" id="RHEA:31227"/>
        <dbReference type="ChEBI" id="CHEBI:15378"/>
        <dbReference type="ChEBI" id="CHEBI:57705"/>
        <dbReference type="ChEBI" id="CHEBI:58223"/>
        <dbReference type="ChEBI" id="CHEBI:61387"/>
        <dbReference type="ChEBI" id="CHEBI:61388"/>
        <dbReference type="EC" id="2.4.1.227"/>
    </reaction>
</comment>
<comment type="pathway">
    <text evidence="1">Cell wall biogenesis; peptidoglycan biosynthesis.</text>
</comment>
<comment type="subcellular location">
    <subcellularLocation>
        <location evidence="1">Cell inner membrane</location>
        <topology evidence="1">Peripheral membrane protein</topology>
        <orientation evidence="1">Cytoplasmic side</orientation>
    </subcellularLocation>
</comment>
<comment type="similarity">
    <text evidence="1">Belongs to the glycosyltransferase 28 family. MurG subfamily.</text>
</comment>